<sequence length="70" mass="8307">MTTIVLNPNEPVEVALRRFRRSIERTGLIKELRARTSYEKPTTERKRKKAAAVARLRKQVRRSMPPKKKY</sequence>
<reference key="1">
    <citation type="journal article" date="2004" name="Proc. Natl. Acad. Sci. U.S.A.">
        <title>Genomic plasticity of the causative agent of melioidosis, Burkholderia pseudomallei.</title>
        <authorList>
            <person name="Holden M.T.G."/>
            <person name="Titball R.W."/>
            <person name="Peacock S.J."/>
            <person name="Cerdeno-Tarraga A.-M."/>
            <person name="Atkins T."/>
            <person name="Crossman L.C."/>
            <person name="Pitt T."/>
            <person name="Churcher C."/>
            <person name="Mungall K.L."/>
            <person name="Bentley S.D."/>
            <person name="Sebaihia M."/>
            <person name="Thomson N.R."/>
            <person name="Bason N."/>
            <person name="Beacham I.R."/>
            <person name="Brooks K."/>
            <person name="Brown K.A."/>
            <person name="Brown N.F."/>
            <person name="Challis G.L."/>
            <person name="Cherevach I."/>
            <person name="Chillingworth T."/>
            <person name="Cronin A."/>
            <person name="Crossett B."/>
            <person name="Davis P."/>
            <person name="DeShazer D."/>
            <person name="Feltwell T."/>
            <person name="Fraser A."/>
            <person name="Hance Z."/>
            <person name="Hauser H."/>
            <person name="Holroyd S."/>
            <person name="Jagels K."/>
            <person name="Keith K.E."/>
            <person name="Maddison M."/>
            <person name="Moule S."/>
            <person name="Price C."/>
            <person name="Quail M.A."/>
            <person name="Rabbinowitsch E."/>
            <person name="Rutherford K."/>
            <person name="Sanders M."/>
            <person name="Simmonds M."/>
            <person name="Songsivilai S."/>
            <person name="Stevens K."/>
            <person name="Tumapa S."/>
            <person name="Vesaratchavest M."/>
            <person name="Whitehead S."/>
            <person name="Yeats C."/>
            <person name="Barrell B.G."/>
            <person name="Oyston P.C.F."/>
            <person name="Parkhill J."/>
        </authorList>
    </citation>
    <scope>NUCLEOTIDE SEQUENCE [LARGE SCALE GENOMIC DNA]</scope>
    <source>
        <strain>K96243</strain>
    </source>
</reference>
<gene>
    <name evidence="1" type="primary">rpsU2</name>
    <name type="ordered locus">BPSS1364.1</name>
</gene>
<comment type="similarity">
    <text evidence="1">Belongs to the bacterial ribosomal protein bS21 family.</text>
</comment>
<feature type="chain" id="PRO_0000266638" description="Small ribosomal subunit protein bS21B">
    <location>
        <begin position="1"/>
        <end position="70"/>
    </location>
</feature>
<feature type="region of interest" description="Disordered" evidence="2">
    <location>
        <begin position="37"/>
        <end position="70"/>
    </location>
</feature>
<feature type="compositionally biased region" description="Basic residues" evidence="2">
    <location>
        <begin position="45"/>
        <end position="70"/>
    </location>
</feature>
<proteinExistence type="inferred from homology"/>
<evidence type="ECO:0000255" key="1">
    <source>
        <dbReference type="HAMAP-Rule" id="MF_00358"/>
    </source>
</evidence>
<evidence type="ECO:0000256" key="2">
    <source>
        <dbReference type="SAM" id="MobiDB-lite"/>
    </source>
</evidence>
<evidence type="ECO:0000305" key="3"/>
<keyword id="KW-1185">Reference proteome</keyword>
<keyword id="KW-0687">Ribonucleoprotein</keyword>
<keyword id="KW-0689">Ribosomal protein</keyword>
<protein>
    <recommendedName>
        <fullName evidence="1">Small ribosomal subunit protein bS21B</fullName>
    </recommendedName>
    <alternativeName>
        <fullName evidence="3">30S ribosomal protein S21 2</fullName>
    </alternativeName>
</protein>
<name>RS212_BURPS</name>
<organism>
    <name type="scientific">Burkholderia pseudomallei (strain K96243)</name>
    <dbReference type="NCBI Taxonomy" id="272560"/>
    <lineage>
        <taxon>Bacteria</taxon>
        <taxon>Pseudomonadati</taxon>
        <taxon>Pseudomonadota</taxon>
        <taxon>Betaproteobacteria</taxon>
        <taxon>Burkholderiales</taxon>
        <taxon>Burkholderiaceae</taxon>
        <taxon>Burkholderia</taxon>
        <taxon>pseudomallei group</taxon>
    </lineage>
</organism>
<accession>Q63KJ7</accession>
<dbReference type="EMBL" id="BX571966">
    <property type="protein sequence ID" value="CAH38836.1"/>
    <property type="molecule type" value="Genomic_DNA"/>
</dbReference>
<dbReference type="RefSeq" id="YP_111375.1">
    <property type="nucleotide sequence ID" value="NC_006351.1"/>
</dbReference>
<dbReference type="SMR" id="Q63KJ7"/>
<dbReference type="STRING" id="272560.BPSS1364a"/>
<dbReference type="KEGG" id="bps:BPSS1364a"/>
<dbReference type="PATRIC" id="fig|272560.6.peg.5589"/>
<dbReference type="eggNOG" id="COG0828">
    <property type="taxonomic scope" value="Bacteria"/>
</dbReference>
<dbReference type="Proteomes" id="UP000000605">
    <property type="component" value="Chromosome 2"/>
</dbReference>
<dbReference type="GO" id="GO:1990904">
    <property type="term" value="C:ribonucleoprotein complex"/>
    <property type="evidence" value="ECO:0007669"/>
    <property type="project" value="UniProtKB-KW"/>
</dbReference>
<dbReference type="GO" id="GO:0005840">
    <property type="term" value="C:ribosome"/>
    <property type="evidence" value="ECO:0007669"/>
    <property type="project" value="UniProtKB-KW"/>
</dbReference>
<dbReference type="GO" id="GO:0003735">
    <property type="term" value="F:structural constituent of ribosome"/>
    <property type="evidence" value="ECO:0007669"/>
    <property type="project" value="InterPro"/>
</dbReference>
<dbReference type="GO" id="GO:0006412">
    <property type="term" value="P:translation"/>
    <property type="evidence" value="ECO:0007669"/>
    <property type="project" value="UniProtKB-UniRule"/>
</dbReference>
<dbReference type="Gene3D" id="1.20.5.1150">
    <property type="entry name" value="Ribosomal protein S8"/>
    <property type="match status" value="1"/>
</dbReference>
<dbReference type="HAMAP" id="MF_00358">
    <property type="entry name" value="Ribosomal_bS21"/>
    <property type="match status" value="1"/>
</dbReference>
<dbReference type="InterPro" id="IPR001911">
    <property type="entry name" value="Ribosomal_bS21"/>
</dbReference>
<dbReference type="InterPro" id="IPR038380">
    <property type="entry name" value="Ribosomal_bS21_sf"/>
</dbReference>
<dbReference type="NCBIfam" id="TIGR00030">
    <property type="entry name" value="S21p"/>
    <property type="match status" value="1"/>
</dbReference>
<dbReference type="PANTHER" id="PTHR21109">
    <property type="entry name" value="MITOCHONDRIAL 28S RIBOSOMAL PROTEIN S21"/>
    <property type="match status" value="1"/>
</dbReference>
<dbReference type="PANTHER" id="PTHR21109:SF22">
    <property type="entry name" value="SMALL RIBOSOMAL SUBUNIT PROTEIN BS21"/>
    <property type="match status" value="1"/>
</dbReference>
<dbReference type="Pfam" id="PF01165">
    <property type="entry name" value="Ribosomal_S21"/>
    <property type="match status" value="1"/>
</dbReference>
<dbReference type="PRINTS" id="PR00976">
    <property type="entry name" value="RIBOSOMALS21"/>
</dbReference>